<comment type="function">
    <text evidence="1">Bifunctional enzyme with both catalase and broad-spectrum peroxidase activity.</text>
</comment>
<comment type="catalytic activity">
    <reaction evidence="1">
        <text>H2O2 + AH2 = A + 2 H2O</text>
        <dbReference type="Rhea" id="RHEA:30275"/>
        <dbReference type="ChEBI" id="CHEBI:13193"/>
        <dbReference type="ChEBI" id="CHEBI:15377"/>
        <dbReference type="ChEBI" id="CHEBI:16240"/>
        <dbReference type="ChEBI" id="CHEBI:17499"/>
        <dbReference type="EC" id="1.11.1.21"/>
    </reaction>
</comment>
<comment type="catalytic activity">
    <reaction evidence="1">
        <text>2 H2O2 = O2 + 2 H2O</text>
        <dbReference type="Rhea" id="RHEA:20309"/>
        <dbReference type="ChEBI" id="CHEBI:15377"/>
        <dbReference type="ChEBI" id="CHEBI:15379"/>
        <dbReference type="ChEBI" id="CHEBI:16240"/>
        <dbReference type="EC" id="1.11.1.21"/>
    </reaction>
</comment>
<comment type="cofactor">
    <cofactor evidence="1">
        <name>heme b</name>
        <dbReference type="ChEBI" id="CHEBI:60344"/>
    </cofactor>
    <text evidence="1">Binds 1 heme b (iron(II)-protoporphyrin IX) group per dimer.</text>
</comment>
<comment type="subunit">
    <text evidence="1">Homodimer or homotetramer.</text>
</comment>
<comment type="PTM">
    <text evidence="1">Formation of the three residue Trp-Tyr-Met cross-link is important for the catalase, but not the peroxidase activity of the enzyme.</text>
</comment>
<comment type="similarity">
    <text evidence="1">Belongs to the peroxidase family. Peroxidase/catalase subfamily.</text>
</comment>
<organism>
    <name type="scientific">Agrobacterium fabrum (strain C58 / ATCC 33970)</name>
    <name type="common">Agrobacterium tumefaciens (strain C58)</name>
    <dbReference type="NCBI Taxonomy" id="176299"/>
    <lineage>
        <taxon>Bacteria</taxon>
        <taxon>Pseudomonadati</taxon>
        <taxon>Pseudomonadota</taxon>
        <taxon>Alphaproteobacteria</taxon>
        <taxon>Hyphomicrobiales</taxon>
        <taxon>Rhizobiaceae</taxon>
        <taxon>Rhizobium/Agrobacterium group</taxon>
        <taxon>Agrobacterium</taxon>
        <taxon>Agrobacterium tumefaciens complex</taxon>
    </lineage>
</organism>
<gene>
    <name evidence="1" type="primary">katG</name>
    <name type="ordered locus">Atu4642</name>
    <name type="ORF">AGR_L_481</name>
</gene>
<proteinExistence type="inferred from homology"/>
<dbReference type="EC" id="1.11.1.21" evidence="1"/>
<dbReference type="EMBL" id="AE007870">
    <property type="protein sequence ID" value="AAK88805.2"/>
    <property type="molecule type" value="Genomic_DNA"/>
</dbReference>
<dbReference type="RefSeq" id="NP_356020.2">
    <property type="nucleotide sequence ID" value="NC_003063.2"/>
</dbReference>
<dbReference type="RefSeq" id="WP_010974037.1">
    <property type="nucleotide sequence ID" value="NC_003063.2"/>
</dbReference>
<dbReference type="SMR" id="Q7CVH1"/>
<dbReference type="STRING" id="176299.Atu4642"/>
<dbReference type="EnsemblBacteria" id="AAK88805">
    <property type="protein sequence ID" value="AAK88805"/>
    <property type="gene ID" value="Atu4642"/>
</dbReference>
<dbReference type="GeneID" id="1136516"/>
<dbReference type="KEGG" id="atu:Atu4642"/>
<dbReference type="PATRIC" id="fig|176299.10.peg.4447"/>
<dbReference type="eggNOG" id="COG0376">
    <property type="taxonomic scope" value="Bacteria"/>
</dbReference>
<dbReference type="HOGENOM" id="CLU_025424_2_0_5"/>
<dbReference type="OrthoDB" id="9759743at2"/>
<dbReference type="PhylomeDB" id="Q7CVH1"/>
<dbReference type="BioCyc" id="AGRO:ATU4642-MONOMER"/>
<dbReference type="Proteomes" id="UP000000813">
    <property type="component" value="Chromosome linear"/>
</dbReference>
<dbReference type="GO" id="GO:0005829">
    <property type="term" value="C:cytosol"/>
    <property type="evidence" value="ECO:0007669"/>
    <property type="project" value="TreeGrafter"/>
</dbReference>
<dbReference type="GO" id="GO:0004096">
    <property type="term" value="F:catalase activity"/>
    <property type="evidence" value="ECO:0007669"/>
    <property type="project" value="UniProtKB-UniRule"/>
</dbReference>
<dbReference type="GO" id="GO:0020037">
    <property type="term" value="F:heme binding"/>
    <property type="evidence" value="ECO:0007669"/>
    <property type="project" value="InterPro"/>
</dbReference>
<dbReference type="GO" id="GO:0046872">
    <property type="term" value="F:metal ion binding"/>
    <property type="evidence" value="ECO:0007669"/>
    <property type="project" value="UniProtKB-KW"/>
</dbReference>
<dbReference type="GO" id="GO:0070301">
    <property type="term" value="P:cellular response to hydrogen peroxide"/>
    <property type="evidence" value="ECO:0007669"/>
    <property type="project" value="TreeGrafter"/>
</dbReference>
<dbReference type="GO" id="GO:0042744">
    <property type="term" value="P:hydrogen peroxide catabolic process"/>
    <property type="evidence" value="ECO:0007669"/>
    <property type="project" value="UniProtKB-KW"/>
</dbReference>
<dbReference type="FunFam" id="1.10.420.10:FF:000004">
    <property type="entry name" value="Catalase-peroxidase"/>
    <property type="match status" value="1"/>
</dbReference>
<dbReference type="FunFam" id="1.10.520.10:FF:000002">
    <property type="entry name" value="Catalase-peroxidase"/>
    <property type="match status" value="1"/>
</dbReference>
<dbReference type="Gene3D" id="1.10.520.10">
    <property type="match status" value="2"/>
</dbReference>
<dbReference type="Gene3D" id="1.10.420.10">
    <property type="entry name" value="Peroxidase, domain 2"/>
    <property type="match status" value="2"/>
</dbReference>
<dbReference type="HAMAP" id="MF_01961">
    <property type="entry name" value="Catal_peroxid"/>
    <property type="match status" value="1"/>
</dbReference>
<dbReference type="InterPro" id="IPR000763">
    <property type="entry name" value="Catalase_peroxidase"/>
</dbReference>
<dbReference type="InterPro" id="IPR002016">
    <property type="entry name" value="Haem_peroxidase"/>
</dbReference>
<dbReference type="InterPro" id="IPR010255">
    <property type="entry name" value="Haem_peroxidase_sf"/>
</dbReference>
<dbReference type="InterPro" id="IPR019794">
    <property type="entry name" value="Peroxidases_AS"/>
</dbReference>
<dbReference type="NCBIfam" id="TIGR00198">
    <property type="entry name" value="cat_per_HPI"/>
    <property type="match status" value="1"/>
</dbReference>
<dbReference type="NCBIfam" id="NF011635">
    <property type="entry name" value="PRK15061.1"/>
    <property type="match status" value="1"/>
</dbReference>
<dbReference type="PANTHER" id="PTHR30555:SF6">
    <property type="entry name" value="CATALASE-PEROXIDASE"/>
    <property type="match status" value="1"/>
</dbReference>
<dbReference type="PANTHER" id="PTHR30555">
    <property type="entry name" value="HYDROPEROXIDASE I, BIFUNCTIONAL CATALASE-PEROXIDASE"/>
    <property type="match status" value="1"/>
</dbReference>
<dbReference type="Pfam" id="PF00141">
    <property type="entry name" value="peroxidase"/>
    <property type="match status" value="2"/>
</dbReference>
<dbReference type="PRINTS" id="PR00460">
    <property type="entry name" value="BPEROXIDASE"/>
</dbReference>
<dbReference type="PRINTS" id="PR00458">
    <property type="entry name" value="PEROXIDASE"/>
</dbReference>
<dbReference type="SUPFAM" id="SSF48113">
    <property type="entry name" value="Heme-dependent peroxidases"/>
    <property type="match status" value="2"/>
</dbReference>
<dbReference type="PROSITE" id="PS00436">
    <property type="entry name" value="PEROXIDASE_2"/>
    <property type="match status" value="1"/>
</dbReference>
<dbReference type="PROSITE" id="PS50873">
    <property type="entry name" value="PEROXIDASE_4"/>
    <property type="match status" value="1"/>
</dbReference>
<evidence type="ECO:0000255" key="1">
    <source>
        <dbReference type="HAMAP-Rule" id="MF_01961"/>
    </source>
</evidence>
<sequence length="723" mass="78713">MDATSKPAGKCPVMHGGNTASGKSVTEWWPNALNLDILHQHDTKTNPLGTSFNYREALKTLDVEALKADLRALMTDSQEWWPADWGSYVGMMARVTWHAAGSYRVTDGRGGANTGNQRFAPLNSWPDNVNTDKGRRLLWPIKKKYGNKISWADLIALAGTIAYDVAGLKTFGFAFGREDIWAPEKDTYWGDEKEWLAPSDGRYGDVSKPETLENPLAAVQMGLIYVNPEGVNGKSDPLATAAQMRETFARMGMDDEETVALTAGGHTIGKSHGNGSAANLSPDPEAAGPEYQGLGWINTKGRGIGRDTVVSGIEGAWTSEPTKWDNGFFDMLFKHEWTLTHSPAGASQWAPITIAEEDKPVDVEDASIRTIPMMTDADMALKVDPIYREISLKFKDDQDHFSDVFARAWFKLTHRDMGPKSRYVGPDVPAEDLIWQDPIPAGSTSYDVAAVKAKIAASGLSVADLVSTAWDSARTFRGSDKRGGANGARIRLAPQKDWEGNEPARLSRVLSVLEPIARETGASIADVIVLAGNYGVEQAAKAAGFDIAVPFAAGRGDASAEQTDADSFAPLEPLADGFRNWVKKDYVVSPEELLLDRAQLLGLTAPELTVLIGGLRVIGANYGGAAHGVFTDKPGALTTDFFTTLTDMAYSWVPTGNNLYEIRDRKTGAARYSATRVDLVIGSNSILRAYAEVYAQDDNREKFARDFIAAWTKVMNADRFDLI</sequence>
<name>KATG_AGRFC</name>
<accession>Q7CVH1</accession>
<protein>
    <recommendedName>
        <fullName evidence="1">Catalase-peroxidase</fullName>
        <shortName evidence="1">CP</shortName>
        <ecNumber evidence="1">1.11.1.21</ecNumber>
    </recommendedName>
    <alternativeName>
        <fullName evidence="1">Peroxidase/catalase</fullName>
    </alternativeName>
</protein>
<keyword id="KW-0349">Heme</keyword>
<keyword id="KW-0376">Hydrogen peroxide</keyword>
<keyword id="KW-0408">Iron</keyword>
<keyword id="KW-0479">Metal-binding</keyword>
<keyword id="KW-0560">Oxidoreductase</keyword>
<keyword id="KW-0575">Peroxidase</keyword>
<keyword id="KW-1185">Reference proteome</keyword>
<feature type="chain" id="PRO_0000354716" description="Catalase-peroxidase">
    <location>
        <begin position="1"/>
        <end position="723"/>
    </location>
</feature>
<feature type="active site" description="Proton acceptor" evidence="1">
    <location>
        <position position="98"/>
    </location>
</feature>
<feature type="binding site" description="axial binding residue" evidence="1">
    <location>
        <position position="266"/>
    </location>
    <ligand>
        <name>heme b</name>
        <dbReference type="ChEBI" id="CHEBI:60344"/>
    </ligand>
    <ligandPart>
        <name>Fe</name>
        <dbReference type="ChEBI" id="CHEBI:18248"/>
    </ligandPart>
</feature>
<feature type="site" description="Transition state stabilizer" evidence="1">
    <location>
        <position position="94"/>
    </location>
</feature>
<feature type="cross-link" description="Tryptophyl-tyrosyl-methioninium (Trp-Tyr) (with M-251)" evidence="1">
    <location>
        <begin position="97"/>
        <end position="225"/>
    </location>
</feature>
<feature type="cross-link" description="Tryptophyl-tyrosyl-methioninium (Tyr-Met) (with W-97)" evidence="1">
    <location>
        <begin position="225"/>
        <end position="251"/>
    </location>
</feature>
<reference key="1">
    <citation type="journal article" date="2001" name="Science">
        <title>The genome of the natural genetic engineer Agrobacterium tumefaciens C58.</title>
        <authorList>
            <person name="Wood D.W."/>
            <person name="Setubal J.C."/>
            <person name="Kaul R."/>
            <person name="Monks D.E."/>
            <person name="Kitajima J.P."/>
            <person name="Okura V.K."/>
            <person name="Zhou Y."/>
            <person name="Chen L."/>
            <person name="Wood G.E."/>
            <person name="Almeida N.F. Jr."/>
            <person name="Woo L."/>
            <person name="Chen Y."/>
            <person name="Paulsen I.T."/>
            <person name="Eisen J.A."/>
            <person name="Karp P.D."/>
            <person name="Bovee D. Sr."/>
            <person name="Chapman P."/>
            <person name="Clendenning J."/>
            <person name="Deatherage G."/>
            <person name="Gillet W."/>
            <person name="Grant C."/>
            <person name="Kutyavin T."/>
            <person name="Levy R."/>
            <person name="Li M.-J."/>
            <person name="McClelland E."/>
            <person name="Palmieri A."/>
            <person name="Raymond C."/>
            <person name="Rouse G."/>
            <person name="Saenphimmachak C."/>
            <person name="Wu Z."/>
            <person name="Romero P."/>
            <person name="Gordon D."/>
            <person name="Zhang S."/>
            <person name="Yoo H."/>
            <person name="Tao Y."/>
            <person name="Biddle P."/>
            <person name="Jung M."/>
            <person name="Krespan W."/>
            <person name="Perry M."/>
            <person name="Gordon-Kamm B."/>
            <person name="Liao L."/>
            <person name="Kim S."/>
            <person name="Hendrick C."/>
            <person name="Zhao Z.-Y."/>
            <person name="Dolan M."/>
            <person name="Chumley F."/>
            <person name="Tingey S.V."/>
            <person name="Tomb J.-F."/>
            <person name="Gordon M.P."/>
            <person name="Olson M.V."/>
            <person name="Nester E.W."/>
        </authorList>
    </citation>
    <scope>NUCLEOTIDE SEQUENCE [LARGE SCALE GENOMIC DNA]</scope>
    <source>
        <strain>C58 / ATCC 33970</strain>
    </source>
</reference>
<reference key="2">
    <citation type="journal article" date="2001" name="Science">
        <title>Genome sequence of the plant pathogen and biotechnology agent Agrobacterium tumefaciens C58.</title>
        <authorList>
            <person name="Goodner B."/>
            <person name="Hinkle G."/>
            <person name="Gattung S."/>
            <person name="Miller N."/>
            <person name="Blanchard M."/>
            <person name="Qurollo B."/>
            <person name="Goldman B.S."/>
            <person name="Cao Y."/>
            <person name="Askenazi M."/>
            <person name="Halling C."/>
            <person name="Mullin L."/>
            <person name="Houmiel K."/>
            <person name="Gordon J."/>
            <person name="Vaudin M."/>
            <person name="Iartchouk O."/>
            <person name="Epp A."/>
            <person name="Liu F."/>
            <person name="Wollam C."/>
            <person name="Allinger M."/>
            <person name="Doughty D."/>
            <person name="Scott C."/>
            <person name="Lappas C."/>
            <person name="Markelz B."/>
            <person name="Flanagan C."/>
            <person name="Crowell C."/>
            <person name="Gurson J."/>
            <person name="Lomo C."/>
            <person name="Sear C."/>
            <person name="Strub G."/>
            <person name="Cielo C."/>
            <person name="Slater S."/>
        </authorList>
    </citation>
    <scope>NUCLEOTIDE SEQUENCE [LARGE SCALE GENOMIC DNA]</scope>
    <source>
        <strain>C58 / ATCC 33970</strain>
    </source>
</reference>